<sequence length="878" mass="95075">MSHPTSTPAFTVADIRKSFLDFFASKGHTVVPSSSLVPGNDPTLMFTNSGMVQFKDVFLGTDKRSYVRAASVQACLRAGGKHNDLENVGYTARHHTFFEMLGNWSFGDYFKRESLKWAWELLTDVYKLPADKLWATVYIDDDEAYDIWTKEIGLPPERVVRIGDNKGAKYASDNFWMMADTGPCGPCSEIFYDHGPEIAGGPPGSPEQDGDRYIEIWNNVFMQFDMQPDGSVKPLPAPCVDTGMGLERLAAILQHVHSNYEIDVFDALIKAAARETGEKDLNNKSLRVIADHIRATAFLVSDGVNPSNEGRGYVQRRIIRRAIRHGYKLGKKTPFFHKLVADLARLMGDAYPKLRTDEARITAVLKAEEERFFETLEIGMTILDTALAGGAKVLPGDVAFKLHDTYGFPLDLSADVCRERGVDVDETGFNAAMDRQKNQARAAGKFKMDRALEYAGSGNTFTGYERLEETAKIVALYADGVPVAALTKGQSGVVVLDTTPFYAESGGQVGDEGELISGSAHFAVGDTLKIKSDVYGHHGTVEQGTLNVGDHVNARVNLAVRAATVRNHSATHLMHKALREVLGEHVQQKGSLVNAERTRFDFAHNAPVTDDQIREIEARVNAEILSNVATDASVMDMEAAQKTGAMMLFGEKYGDKVRVLSIGSSKELCGGTHVTRTGDIGLFKIVAESGVAAGVRRVEAVTGENALAYLQSLESTVQAAAGSLKASPTELQQRIGQVLDQVKSLEKEIAALKGKLASSQGDELMAQAFDVKGLKVLAARLEGADARTLRETMDKLKDKLKTGVFVLAAVDGNKVQIAAGVTADSVTVVKAGELVNFVAQQVGGKGGGKADMAMAGGTDASRLDDALKSVRAWVTERA</sequence>
<organism>
    <name type="scientific">Polaromonas sp. (strain JS666 / ATCC BAA-500)</name>
    <dbReference type="NCBI Taxonomy" id="296591"/>
    <lineage>
        <taxon>Bacteria</taxon>
        <taxon>Pseudomonadati</taxon>
        <taxon>Pseudomonadota</taxon>
        <taxon>Betaproteobacteria</taxon>
        <taxon>Burkholderiales</taxon>
        <taxon>Comamonadaceae</taxon>
        <taxon>Polaromonas</taxon>
    </lineage>
</organism>
<feature type="chain" id="PRO_0000347721" description="Alanine--tRNA ligase">
    <location>
        <begin position="1"/>
        <end position="878"/>
    </location>
</feature>
<feature type="binding site" evidence="1">
    <location>
        <position position="568"/>
    </location>
    <ligand>
        <name>Zn(2+)</name>
        <dbReference type="ChEBI" id="CHEBI:29105"/>
    </ligand>
</feature>
<feature type="binding site" evidence="1">
    <location>
        <position position="572"/>
    </location>
    <ligand>
        <name>Zn(2+)</name>
        <dbReference type="ChEBI" id="CHEBI:29105"/>
    </ligand>
</feature>
<feature type="binding site" evidence="1">
    <location>
        <position position="669"/>
    </location>
    <ligand>
        <name>Zn(2+)</name>
        <dbReference type="ChEBI" id="CHEBI:29105"/>
    </ligand>
</feature>
<feature type="binding site" evidence="1">
    <location>
        <position position="673"/>
    </location>
    <ligand>
        <name>Zn(2+)</name>
        <dbReference type="ChEBI" id="CHEBI:29105"/>
    </ligand>
</feature>
<accession>Q129G8</accession>
<gene>
    <name evidence="1" type="primary">alaS</name>
    <name type="ordered locus">Bpro_2910</name>
</gene>
<keyword id="KW-0030">Aminoacyl-tRNA synthetase</keyword>
<keyword id="KW-0067">ATP-binding</keyword>
<keyword id="KW-0963">Cytoplasm</keyword>
<keyword id="KW-0436">Ligase</keyword>
<keyword id="KW-0479">Metal-binding</keyword>
<keyword id="KW-0547">Nucleotide-binding</keyword>
<keyword id="KW-0648">Protein biosynthesis</keyword>
<keyword id="KW-1185">Reference proteome</keyword>
<keyword id="KW-0694">RNA-binding</keyword>
<keyword id="KW-0820">tRNA-binding</keyword>
<keyword id="KW-0862">Zinc</keyword>
<name>SYA_POLSJ</name>
<evidence type="ECO:0000255" key="1">
    <source>
        <dbReference type="HAMAP-Rule" id="MF_00036"/>
    </source>
</evidence>
<protein>
    <recommendedName>
        <fullName evidence="1">Alanine--tRNA ligase</fullName>
        <ecNumber evidence="1">6.1.1.7</ecNumber>
    </recommendedName>
    <alternativeName>
        <fullName evidence="1">Alanyl-tRNA synthetase</fullName>
        <shortName evidence="1">AlaRS</shortName>
    </alternativeName>
</protein>
<reference key="1">
    <citation type="journal article" date="2008" name="Appl. Environ. Microbiol.">
        <title>The genome of Polaromonas sp. strain JS666: insights into the evolution of a hydrocarbon- and xenobiotic-degrading bacterium, and features of relevance to biotechnology.</title>
        <authorList>
            <person name="Mattes T.E."/>
            <person name="Alexander A.K."/>
            <person name="Richardson P.M."/>
            <person name="Munk A.C."/>
            <person name="Han C.S."/>
            <person name="Stothard P."/>
            <person name="Coleman N.V."/>
        </authorList>
    </citation>
    <scope>NUCLEOTIDE SEQUENCE [LARGE SCALE GENOMIC DNA]</scope>
    <source>
        <strain>JS666 / ATCC BAA-500</strain>
    </source>
</reference>
<dbReference type="EC" id="6.1.1.7" evidence="1"/>
<dbReference type="EMBL" id="CP000316">
    <property type="protein sequence ID" value="ABE44824.1"/>
    <property type="molecule type" value="Genomic_DNA"/>
</dbReference>
<dbReference type="RefSeq" id="WP_011483822.1">
    <property type="nucleotide sequence ID" value="NC_007948.1"/>
</dbReference>
<dbReference type="SMR" id="Q129G8"/>
<dbReference type="STRING" id="296591.Bpro_2910"/>
<dbReference type="KEGG" id="pol:Bpro_2910"/>
<dbReference type="eggNOG" id="COG0013">
    <property type="taxonomic scope" value="Bacteria"/>
</dbReference>
<dbReference type="HOGENOM" id="CLU_004485_1_1_4"/>
<dbReference type="OrthoDB" id="9803884at2"/>
<dbReference type="Proteomes" id="UP000001983">
    <property type="component" value="Chromosome"/>
</dbReference>
<dbReference type="GO" id="GO:0005829">
    <property type="term" value="C:cytosol"/>
    <property type="evidence" value="ECO:0007669"/>
    <property type="project" value="TreeGrafter"/>
</dbReference>
<dbReference type="GO" id="GO:0004813">
    <property type="term" value="F:alanine-tRNA ligase activity"/>
    <property type="evidence" value="ECO:0007669"/>
    <property type="project" value="UniProtKB-UniRule"/>
</dbReference>
<dbReference type="GO" id="GO:0002161">
    <property type="term" value="F:aminoacyl-tRNA deacylase activity"/>
    <property type="evidence" value="ECO:0007669"/>
    <property type="project" value="TreeGrafter"/>
</dbReference>
<dbReference type="GO" id="GO:0005524">
    <property type="term" value="F:ATP binding"/>
    <property type="evidence" value="ECO:0007669"/>
    <property type="project" value="UniProtKB-UniRule"/>
</dbReference>
<dbReference type="GO" id="GO:0000049">
    <property type="term" value="F:tRNA binding"/>
    <property type="evidence" value="ECO:0007669"/>
    <property type="project" value="UniProtKB-KW"/>
</dbReference>
<dbReference type="GO" id="GO:0008270">
    <property type="term" value="F:zinc ion binding"/>
    <property type="evidence" value="ECO:0007669"/>
    <property type="project" value="UniProtKB-UniRule"/>
</dbReference>
<dbReference type="GO" id="GO:0006419">
    <property type="term" value="P:alanyl-tRNA aminoacylation"/>
    <property type="evidence" value="ECO:0007669"/>
    <property type="project" value="UniProtKB-UniRule"/>
</dbReference>
<dbReference type="GO" id="GO:0045892">
    <property type="term" value="P:negative regulation of DNA-templated transcription"/>
    <property type="evidence" value="ECO:0007669"/>
    <property type="project" value="TreeGrafter"/>
</dbReference>
<dbReference type="CDD" id="cd00673">
    <property type="entry name" value="AlaRS_core"/>
    <property type="match status" value="1"/>
</dbReference>
<dbReference type="FunFam" id="2.40.30.130:FF:000001">
    <property type="entry name" value="Alanine--tRNA ligase"/>
    <property type="match status" value="1"/>
</dbReference>
<dbReference type="FunFam" id="3.10.310.40:FF:000001">
    <property type="entry name" value="Alanine--tRNA ligase"/>
    <property type="match status" value="1"/>
</dbReference>
<dbReference type="FunFam" id="3.30.54.20:FF:000001">
    <property type="entry name" value="Alanine--tRNA ligase"/>
    <property type="match status" value="1"/>
</dbReference>
<dbReference type="FunFam" id="3.30.930.10:FF:000004">
    <property type="entry name" value="Alanine--tRNA ligase"/>
    <property type="match status" value="1"/>
</dbReference>
<dbReference type="FunFam" id="3.30.980.10:FF:000004">
    <property type="entry name" value="Alanine--tRNA ligase, cytoplasmic"/>
    <property type="match status" value="1"/>
</dbReference>
<dbReference type="Gene3D" id="2.40.30.130">
    <property type="match status" value="1"/>
</dbReference>
<dbReference type="Gene3D" id="3.10.310.40">
    <property type="match status" value="1"/>
</dbReference>
<dbReference type="Gene3D" id="3.30.54.20">
    <property type="match status" value="1"/>
</dbReference>
<dbReference type="Gene3D" id="6.10.250.550">
    <property type="match status" value="1"/>
</dbReference>
<dbReference type="Gene3D" id="3.30.930.10">
    <property type="entry name" value="Bira Bifunctional Protein, Domain 2"/>
    <property type="match status" value="1"/>
</dbReference>
<dbReference type="Gene3D" id="3.30.980.10">
    <property type="entry name" value="Threonyl-trna Synthetase, Chain A, domain 2"/>
    <property type="match status" value="1"/>
</dbReference>
<dbReference type="HAMAP" id="MF_00036_B">
    <property type="entry name" value="Ala_tRNA_synth_B"/>
    <property type="match status" value="1"/>
</dbReference>
<dbReference type="InterPro" id="IPR045864">
    <property type="entry name" value="aa-tRNA-synth_II/BPL/LPL"/>
</dbReference>
<dbReference type="InterPro" id="IPR002318">
    <property type="entry name" value="Ala-tRNA-lgiase_IIc"/>
</dbReference>
<dbReference type="InterPro" id="IPR018162">
    <property type="entry name" value="Ala-tRNA-ligase_IIc_anticod-bd"/>
</dbReference>
<dbReference type="InterPro" id="IPR018165">
    <property type="entry name" value="Ala-tRNA-synth_IIc_core"/>
</dbReference>
<dbReference type="InterPro" id="IPR018164">
    <property type="entry name" value="Ala-tRNA-synth_IIc_N"/>
</dbReference>
<dbReference type="InterPro" id="IPR050058">
    <property type="entry name" value="Ala-tRNA_ligase"/>
</dbReference>
<dbReference type="InterPro" id="IPR023033">
    <property type="entry name" value="Ala_tRNA_ligase_euk/bac"/>
</dbReference>
<dbReference type="InterPro" id="IPR003156">
    <property type="entry name" value="DHHA1_dom"/>
</dbReference>
<dbReference type="InterPro" id="IPR018163">
    <property type="entry name" value="Thr/Ala-tRNA-synth_IIc_edit"/>
</dbReference>
<dbReference type="InterPro" id="IPR009000">
    <property type="entry name" value="Transl_B-barrel_sf"/>
</dbReference>
<dbReference type="InterPro" id="IPR012947">
    <property type="entry name" value="tRNA_SAD"/>
</dbReference>
<dbReference type="NCBIfam" id="TIGR00344">
    <property type="entry name" value="alaS"/>
    <property type="match status" value="1"/>
</dbReference>
<dbReference type="PANTHER" id="PTHR11777:SF9">
    <property type="entry name" value="ALANINE--TRNA LIGASE, CYTOPLASMIC"/>
    <property type="match status" value="1"/>
</dbReference>
<dbReference type="PANTHER" id="PTHR11777">
    <property type="entry name" value="ALANYL-TRNA SYNTHETASE"/>
    <property type="match status" value="1"/>
</dbReference>
<dbReference type="Pfam" id="PF02272">
    <property type="entry name" value="DHHA1"/>
    <property type="match status" value="1"/>
</dbReference>
<dbReference type="Pfam" id="PF01411">
    <property type="entry name" value="tRNA-synt_2c"/>
    <property type="match status" value="1"/>
</dbReference>
<dbReference type="Pfam" id="PF07973">
    <property type="entry name" value="tRNA_SAD"/>
    <property type="match status" value="1"/>
</dbReference>
<dbReference type="PRINTS" id="PR00980">
    <property type="entry name" value="TRNASYNTHALA"/>
</dbReference>
<dbReference type="SMART" id="SM00863">
    <property type="entry name" value="tRNA_SAD"/>
    <property type="match status" value="1"/>
</dbReference>
<dbReference type="SUPFAM" id="SSF55681">
    <property type="entry name" value="Class II aaRS and biotin synthetases"/>
    <property type="match status" value="1"/>
</dbReference>
<dbReference type="SUPFAM" id="SSF101353">
    <property type="entry name" value="Putative anticodon-binding domain of alanyl-tRNA synthetase (AlaRS)"/>
    <property type="match status" value="1"/>
</dbReference>
<dbReference type="SUPFAM" id="SSF55186">
    <property type="entry name" value="ThrRS/AlaRS common domain"/>
    <property type="match status" value="1"/>
</dbReference>
<dbReference type="SUPFAM" id="SSF50447">
    <property type="entry name" value="Translation proteins"/>
    <property type="match status" value="1"/>
</dbReference>
<dbReference type="PROSITE" id="PS50860">
    <property type="entry name" value="AA_TRNA_LIGASE_II_ALA"/>
    <property type="match status" value="1"/>
</dbReference>
<proteinExistence type="inferred from homology"/>
<comment type="function">
    <text evidence="1">Catalyzes the attachment of alanine to tRNA(Ala) in a two-step reaction: alanine is first activated by ATP to form Ala-AMP and then transferred to the acceptor end of tRNA(Ala). Also edits incorrectly charged Ser-tRNA(Ala) and Gly-tRNA(Ala) via its editing domain.</text>
</comment>
<comment type="catalytic activity">
    <reaction evidence="1">
        <text>tRNA(Ala) + L-alanine + ATP = L-alanyl-tRNA(Ala) + AMP + diphosphate</text>
        <dbReference type="Rhea" id="RHEA:12540"/>
        <dbReference type="Rhea" id="RHEA-COMP:9657"/>
        <dbReference type="Rhea" id="RHEA-COMP:9923"/>
        <dbReference type="ChEBI" id="CHEBI:30616"/>
        <dbReference type="ChEBI" id="CHEBI:33019"/>
        <dbReference type="ChEBI" id="CHEBI:57972"/>
        <dbReference type="ChEBI" id="CHEBI:78442"/>
        <dbReference type="ChEBI" id="CHEBI:78497"/>
        <dbReference type="ChEBI" id="CHEBI:456215"/>
        <dbReference type="EC" id="6.1.1.7"/>
    </reaction>
</comment>
<comment type="cofactor">
    <cofactor evidence="1">
        <name>Zn(2+)</name>
        <dbReference type="ChEBI" id="CHEBI:29105"/>
    </cofactor>
    <text evidence="1">Binds 1 zinc ion per subunit.</text>
</comment>
<comment type="subcellular location">
    <subcellularLocation>
        <location evidence="1">Cytoplasm</location>
    </subcellularLocation>
</comment>
<comment type="domain">
    <text evidence="1">Consists of three domains; the N-terminal catalytic domain, the editing domain and the C-terminal C-Ala domain. The editing domain removes incorrectly charged amino acids, while the C-Ala domain, along with tRNA(Ala), serves as a bridge to cooperatively bring together the editing and aminoacylation centers thus stimulating deacylation of misacylated tRNAs.</text>
</comment>
<comment type="similarity">
    <text evidence="1">Belongs to the class-II aminoacyl-tRNA synthetase family.</text>
</comment>